<sequence>MSRHVFLTGPPGVGKTTLIQKAIEVLQSSGLPVDGFYTQEVRQEGKRIGFDVVTLSGAQGPLSRVGSQPLPGKPECRVGQYVVNLDSFEQLALPVLRNAGSSCGPKHRVCIIDEIGKMELFSQPFIQAVRQMLSTPGIIVVGTIPVPKGKPLALVEEIRKRRDVKVFNVTRDNRNSLLPDIVAVVQSSRT</sequence>
<organism>
    <name type="scientific">Mus musculus</name>
    <name type="common">Mouse</name>
    <dbReference type="NCBI Taxonomy" id="10090"/>
    <lineage>
        <taxon>Eukaryota</taxon>
        <taxon>Metazoa</taxon>
        <taxon>Chordata</taxon>
        <taxon>Craniata</taxon>
        <taxon>Vertebrata</taxon>
        <taxon>Euteleostomi</taxon>
        <taxon>Mammalia</taxon>
        <taxon>Eutheria</taxon>
        <taxon>Euarchontoglires</taxon>
        <taxon>Glires</taxon>
        <taxon>Rodentia</taxon>
        <taxon>Myomorpha</taxon>
        <taxon>Muroidea</taxon>
        <taxon>Muridae</taxon>
        <taxon>Murinae</taxon>
        <taxon>Mus</taxon>
        <taxon>Mus</taxon>
    </lineage>
</organism>
<comment type="function">
    <text evidence="2">Has nucleotide phosphatase activity towards ATP, GTP, CTP, TTP and UTP. Hydrolyzes nucleoside diphosphates with lower efficiency.</text>
</comment>
<comment type="catalytic activity">
    <reaction evidence="2">
        <text>a ribonucleoside 5'-triphosphate + H2O = a ribonucleoside 5'-diphosphate + phosphate + H(+)</text>
        <dbReference type="Rhea" id="RHEA:23680"/>
        <dbReference type="ChEBI" id="CHEBI:15377"/>
        <dbReference type="ChEBI" id="CHEBI:15378"/>
        <dbReference type="ChEBI" id="CHEBI:43474"/>
        <dbReference type="ChEBI" id="CHEBI:57930"/>
        <dbReference type="ChEBI" id="CHEBI:61557"/>
        <dbReference type="EC" id="3.6.1.15"/>
    </reaction>
    <physiologicalReaction direction="left-to-right" evidence="2">
        <dbReference type="Rhea" id="RHEA:23681"/>
    </physiologicalReaction>
</comment>
<comment type="catalytic activity">
    <reaction evidence="2">
        <text>5-methyl-UTP + H2O = 5-methyl-UDP + phosphate + H(+)</text>
        <dbReference type="Rhea" id="RHEA:65580"/>
        <dbReference type="ChEBI" id="CHEBI:15377"/>
        <dbReference type="ChEBI" id="CHEBI:15378"/>
        <dbReference type="ChEBI" id="CHEBI:43474"/>
        <dbReference type="ChEBI" id="CHEBI:61417"/>
        <dbReference type="ChEBI" id="CHEBI:63527"/>
    </reaction>
    <physiologicalReaction direction="left-to-right" evidence="2">
        <dbReference type="Rhea" id="RHEA:65581"/>
    </physiologicalReaction>
</comment>
<comment type="catalytic activity">
    <reaction evidence="2">
        <text>CTP + H2O = CDP + phosphate + H(+)</text>
        <dbReference type="Rhea" id="RHEA:29387"/>
        <dbReference type="ChEBI" id="CHEBI:15377"/>
        <dbReference type="ChEBI" id="CHEBI:15378"/>
        <dbReference type="ChEBI" id="CHEBI:37563"/>
        <dbReference type="ChEBI" id="CHEBI:43474"/>
        <dbReference type="ChEBI" id="CHEBI:58069"/>
    </reaction>
    <physiologicalReaction direction="left-to-right" evidence="2">
        <dbReference type="Rhea" id="RHEA:29388"/>
    </physiologicalReaction>
</comment>
<comment type="catalytic activity">
    <reaction evidence="2">
        <text>ATP + H2O = ADP + phosphate + H(+)</text>
        <dbReference type="Rhea" id="RHEA:13065"/>
        <dbReference type="ChEBI" id="CHEBI:15377"/>
        <dbReference type="ChEBI" id="CHEBI:15378"/>
        <dbReference type="ChEBI" id="CHEBI:30616"/>
        <dbReference type="ChEBI" id="CHEBI:43474"/>
        <dbReference type="ChEBI" id="CHEBI:456216"/>
    </reaction>
    <physiologicalReaction direction="left-to-right" evidence="2">
        <dbReference type="Rhea" id="RHEA:13066"/>
    </physiologicalReaction>
</comment>
<comment type="catalytic activity">
    <reaction evidence="2">
        <text>GTP + H2O = GDP + phosphate + H(+)</text>
        <dbReference type="Rhea" id="RHEA:19669"/>
        <dbReference type="ChEBI" id="CHEBI:15377"/>
        <dbReference type="ChEBI" id="CHEBI:15378"/>
        <dbReference type="ChEBI" id="CHEBI:37565"/>
        <dbReference type="ChEBI" id="CHEBI:43474"/>
        <dbReference type="ChEBI" id="CHEBI:58189"/>
    </reaction>
    <physiologicalReaction direction="left-to-right" evidence="2">
        <dbReference type="Rhea" id="RHEA:19670"/>
    </physiologicalReaction>
</comment>
<comment type="subunit">
    <text evidence="2">Monomer.</text>
</comment>
<comment type="similarity">
    <text evidence="3">Belongs to the THEP1 NTPase family.</text>
</comment>
<protein>
    <recommendedName>
        <fullName>Cancer-related nucleoside-triphosphatase homolog</fullName>
        <shortName>NTPase</shortName>
        <ecNumber evidence="2">3.6.1.15</ecNumber>
    </recommendedName>
    <alternativeName>
        <fullName>Nucleoside triphosphate phosphohydrolase</fullName>
    </alternativeName>
</protein>
<feature type="chain" id="PRO_0000146712" description="Cancer-related nucleoside-triphosphatase homolog">
    <location>
        <begin position="1"/>
        <end position="190"/>
    </location>
</feature>
<feature type="binding site" evidence="1">
    <location>
        <begin position="9"/>
        <end position="16"/>
    </location>
    <ligand>
        <name>ATP</name>
        <dbReference type="ChEBI" id="CHEBI:30616"/>
    </ligand>
</feature>
<feature type="binding site" evidence="1">
    <location>
        <begin position="109"/>
        <end position="116"/>
    </location>
    <ligand>
        <name>ATP</name>
        <dbReference type="ChEBI" id="CHEBI:30616"/>
    </ligand>
</feature>
<feature type="modified residue" description="N6-acetyllysine" evidence="2">
    <location>
        <position position="165"/>
    </location>
</feature>
<reference key="1">
    <citation type="journal article" date="2005" name="Science">
        <title>The transcriptional landscape of the mammalian genome.</title>
        <authorList>
            <person name="Carninci P."/>
            <person name="Kasukawa T."/>
            <person name="Katayama S."/>
            <person name="Gough J."/>
            <person name="Frith M.C."/>
            <person name="Maeda N."/>
            <person name="Oyama R."/>
            <person name="Ravasi T."/>
            <person name="Lenhard B."/>
            <person name="Wells C."/>
            <person name="Kodzius R."/>
            <person name="Shimokawa K."/>
            <person name="Bajic V.B."/>
            <person name="Brenner S.E."/>
            <person name="Batalov S."/>
            <person name="Forrest A.R."/>
            <person name="Zavolan M."/>
            <person name="Davis M.J."/>
            <person name="Wilming L.G."/>
            <person name="Aidinis V."/>
            <person name="Allen J.E."/>
            <person name="Ambesi-Impiombato A."/>
            <person name="Apweiler R."/>
            <person name="Aturaliya R.N."/>
            <person name="Bailey T.L."/>
            <person name="Bansal M."/>
            <person name="Baxter L."/>
            <person name="Beisel K.W."/>
            <person name="Bersano T."/>
            <person name="Bono H."/>
            <person name="Chalk A.M."/>
            <person name="Chiu K.P."/>
            <person name="Choudhary V."/>
            <person name="Christoffels A."/>
            <person name="Clutterbuck D.R."/>
            <person name="Crowe M.L."/>
            <person name="Dalla E."/>
            <person name="Dalrymple B.P."/>
            <person name="de Bono B."/>
            <person name="Della Gatta G."/>
            <person name="di Bernardo D."/>
            <person name="Down T."/>
            <person name="Engstrom P."/>
            <person name="Fagiolini M."/>
            <person name="Faulkner G."/>
            <person name="Fletcher C.F."/>
            <person name="Fukushima T."/>
            <person name="Furuno M."/>
            <person name="Futaki S."/>
            <person name="Gariboldi M."/>
            <person name="Georgii-Hemming P."/>
            <person name="Gingeras T.R."/>
            <person name="Gojobori T."/>
            <person name="Green R.E."/>
            <person name="Gustincich S."/>
            <person name="Harbers M."/>
            <person name="Hayashi Y."/>
            <person name="Hensch T.K."/>
            <person name="Hirokawa N."/>
            <person name="Hill D."/>
            <person name="Huminiecki L."/>
            <person name="Iacono M."/>
            <person name="Ikeo K."/>
            <person name="Iwama A."/>
            <person name="Ishikawa T."/>
            <person name="Jakt M."/>
            <person name="Kanapin A."/>
            <person name="Katoh M."/>
            <person name="Kawasawa Y."/>
            <person name="Kelso J."/>
            <person name="Kitamura H."/>
            <person name="Kitano H."/>
            <person name="Kollias G."/>
            <person name="Krishnan S.P."/>
            <person name="Kruger A."/>
            <person name="Kummerfeld S.K."/>
            <person name="Kurochkin I.V."/>
            <person name="Lareau L.F."/>
            <person name="Lazarevic D."/>
            <person name="Lipovich L."/>
            <person name="Liu J."/>
            <person name="Liuni S."/>
            <person name="McWilliam S."/>
            <person name="Madan Babu M."/>
            <person name="Madera M."/>
            <person name="Marchionni L."/>
            <person name="Matsuda H."/>
            <person name="Matsuzawa S."/>
            <person name="Miki H."/>
            <person name="Mignone F."/>
            <person name="Miyake S."/>
            <person name="Morris K."/>
            <person name="Mottagui-Tabar S."/>
            <person name="Mulder N."/>
            <person name="Nakano N."/>
            <person name="Nakauchi H."/>
            <person name="Ng P."/>
            <person name="Nilsson R."/>
            <person name="Nishiguchi S."/>
            <person name="Nishikawa S."/>
            <person name="Nori F."/>
            <person name="Ohara O."/>
            <person name="Okazaki Y."/>
            <person name="Orlando V."/>
            <person name="Pang K.C."/>
            <person name="Pavan W.J."/>
            <person name="Pavesi G."/>
            <person name="Pesole G."/>
            <person name="Petrovsky N."/>
            <person name="Piazza S."/>
            <person name="Reed J."/>
            <person name="Reid J.F."/>
            <person name="Ring B.Z."/>
            <person name="Ringwald M."/>
            <person name="Rost B."/>
            <person name="Ruan Y."/>
            <person name="Salzberg S.L."/>
            <person name="Sandelin A."/>
            <person name="Schneider C."/>
            <person name="Schoenbach C."/>
            <person name="Sekiguchi K."/>
            <person name="Semple C.A."/>
            <person name="Seno S."/>
            <person name="Sessa L."/>
            <person name="Sheng Y."/>
            <person name="Shibata Y."/>
            <person name="Shimada H."/>
            <person name="Shimada K."/>
            <person name="Silva D."/>
            <person name="Sinclair B."/>
            <person name="Sperling S."/>
            <person name="Stupka E."/>
            <person name="Sugiura K."/>
            <person name="Sultana R."/>
            <person name="Takenaka Y."/>
            <person name="Taki K."/>
            <person name="Tammoja K."/>
            <person name="Tan S.L."/>
            <person name="Tang S."/>
            <person name="Taylor M.S."/>
            <person name="Tegner J."/>
            <person name="Teichmann S.A."/>
            <person name="Ueda H.R."/>
            <person name="van Nimwegen E."/>
            <person name="Verardo R."/>
            <person name="Wei C.L."/>
            <person name="Yagi K."/>
            <person name="Yamanishi H."/>
            <person name="Zabarovsky E."/>
            <person name="Zhu S."/>
            <person name="Zimmer A."/>
            <person name="Hide W."/>
            <person name="Bult C."/>
            <person name="Grimmond S.M."/>
            <person name="Teasdale R.D."/>
            <person name="Liu E.T."/>
            <person name="Brusic V."/>
            <person name="Quackenbush J."/>
            <person name="Wahlestedt C."/>
            <person name="Mattick J.S."/>
            <person name="Hume D.A."/>
            <person name="Kai C."/>
            <person name="Sasaki D."/>
            <person name="Tomaru Y."/>
            <person name="Fukuda S."/>
            <person name="Kanamori-Katayama M."/>
            <person name="Suzuki M."/>
            <person name="Aoki J."/>
            <person name="Arakawa T."/>
            <person name="Iida J."/>
            <person name="Imamura K."/>
            <person name="Itoh M."/>
            <person name="Kato T."/>
            <person name="Kawaji H."/>
            <person name="Kawagashira N."/>
            <person name="Kawashima T."/>
            <person name="Kojima M."/>
            <person name="Kondo S."/>
            <person name="Konno H."/>
            <person name="Nakano K."/>
            <person name="Ninomiya N."/>
            <person name="Nishio T."/>
            <person name="Okada M."/>
            <person name="Plessy C."/>
            <person name="Shibata K."/>
            <person name="Shiraki T."/>
            <person name="Suzuki S."/>
            <person name="Tagami M."/>
            <person name="Waki K."/>
            <person name="Watahiki A."/>
            <person name="Okamura-Oho Y."/>
            <person name="Suzuki H."/>
            <person name="Kawai J."/>
            <person name="Hayashizaki Y."/>
        </authorList>
    </citation>
    <scope>NUCLEOTIDE SEQUENCE [LARGE SCALE MRNA]</scope>
    <source>
        <strain>C57BL/6J</strain>
        <tissue>Hippocampus</tissue>
        <tissue>Testis</tissue>
        <tissue>Tongue</tissue>
    </source>
</reference>
<reference key="2">
    <citation type="journal article" date="2004" name="Genome Res.">
        <title>The status, quality, and expansion of the NIH full-length cDNA project: the Mammalian Gene Collection (MGC).</title>
        <authorList>
            <consortium name="The MGC Project Team"/>
        </authorList>
    </citation>
    <scope>NUCLEOTIDE SEQUENCE [LARGE SCALE MRNA]</scope>
    <source>
        <strain>FVB/N</strain>
        <tissue>Kidney</tissue>
    </source>
</reference>
<reference key="3">
    <citation type="journal article" date="2010" name="Cell">
        <title>A tissue-specific atlas of mouse protein phosphorylation and expression.</title>
        <authorList>
            <person name="Huttlin E.L."/>
            <person name="Jedrychowski M.P."/>
            <person name="Elias J.E."/>
            <person name="Goswami T."/>
            <person name="Rad R."/>
            <person name="Beausoleil S.A."/>
            <person name="Villen J."/>
            <person name="Haas W."/>
            <person name="Sowa M.E."/>
            <person name="Gygi S.P."/>
        </authorList>
    </citation>
    <scope>IDENTIFICATION BY MASS SPECTROMETRY [LARGE SCALE ANALYSIS]</scope>
    <source>
        <tissue>Brain</tissue>
        <tissue>Heart</tissue>
        <tissue>Kidney</tissue>
        <tissue>Liver</tissue>
        <tissue>Lung</tissue>
        <tissue>Pancreas</tissue>
        <tissue>Spleen</tissue>
        <tissue>Testis</tissue>
    </source>
</reference>
<name>NTPCR_MOUSE</name>
<accession>Q9CQA9</accession>
<dbReference type="EC" id="3.6.1.15" evidence="2"/>
<dbReference type="EMBL" id="AK006433">
    <property type="protein sequence ID" value="BAB24586.1"/>
    <property type="molecule type" value="mRNA"/>
</dbReference>
<dbReference type="EMBL" id="AK010229">
    <property type="protein sequence ID" value="BAB26783.1"/>
    <property type="molecule type" value="mRNA"/>
</dbReference>
<dbReference type="EMBL" id="AK010823">
    <property type="protein sequence ID" value="BAB27206.1"/>
    <property type="molecule type" value="mRNA"/>
</dbReference>
<dbReference type="EMBL" id="AK019321">
    <property type="protein sequence ID" value="BAB31665.1"/>
    <property type="molecule type" value="mRNA"/>
</dbReference>
<dbReference type="EMBL" id="BC025168">
    <property type="protein sequence ID" value="AAH25168.1"/>
    <property type="molecule type" value="mRNA"/>
</dbReference>
<dbReference type="CCDS" id="CCDS22781.1"/>
<dbReference type="RefSeq" id="NP_001297617.1">
    <property type="nucleotide sequence ID" value="NM_001310688.1"/>
</dbReference>
<dbReference type="RefSeq" id="NP_079912.1">
    <property type="nucleotide sequence ID" value="NM_025636.5"/>
</dbReference>
<dbReference type="SMR" id="Q9CQA9"/>
<dbReference type="BioGRID" id="211557">
    <property type="interactions" value="4"/>
</dbReference>
<dbReference type="FunCoup" id="Q9CQA9">
    <property type="interactions" value="1678"/>
</dbReference>
<dbReference type="STRING" id="10090.ENSMUSP00000034313"/>
<dbReference type="GlyGen" id="Q9CQA9">
    <property type="glycosylation" value="1 site, 1 N-linked glycan (1 site)"/>
</dbReference>
<dbReference type="PhosphoSitePlus" id="Q9CQA9"/>
<dbReference type="SwissPalm" id="Q9CQA9"/>
<dbReference type="PaxDb" id="10090-ENSMUSP00000034313"/>
<dbReference type="PeptideAtlas" id="Q9CQA9"/>
<dbReference type="ProteomicsDB" id="291918"/>
<dbReference type="Pumba" id="Q9CQA9"/>
<dbReference type="Antibodypedia" id="34690">
    <property type="antibodies" value="154 antibodies from 27 providers"/>
</dbReference>
<dbReference type="DNASU" id="66566"/>
<dbReference type="Ensembl" id="ENSMUST00000034313.13">
    <property type="protein sequence ID" value="ENSMUSP00000034313.7"/>
    <property type="gene ID" value="ENSMUSG00000031851.15"/>
</dbReference>
<dbReference type="GeneID" id="66566"/>
<dbReference type="KEGG" id="mmu:66566"/>
<dbReference type="UCSC" id="uc009nyk.2">
    <property type="organism name" value="mouse"/>
</dbReference>
<dbReference type="AGR" id="MGI:1913816"/>
<dbReference type="CTD" id="84284"/>
<dbReference type="MGI" id="MGI:1913816">
    <property type="gene designation" value="Ntpcr"/>
</dbReference>
<dbReference type="VEuPathDB" id="HostDB:ENSMUSG00000031851"/>
<dbReference type="eggNOG" id="ENOG502QVJ8">
    <property type="taxonomic scope" value="Eukaryota"/>
</dbReference>
<dbReference type="GeneTree" id="ENSGT00390000018683"/>
<dbReference type="HOGENOM" id="CLU_103145_1_0_1"/>
<dbReference type="InParanoid" id="Q9CQA9"/>
<dbReference type="OMA" id="VTAVQNC"/>
<dbReference type="OrthoDB" id="446244at2759"/>
<dbReference type="PhylomeDB" id="Q9CQA9"/>
<dbReference type="TreeFam" id="TF323592"/>
<dbReference type="BioGRID-ORCS" id="66566">
    <property type="hits" value="0 hits in 77 CRISPR screens"/>
</dbReference>
<dbReference type="ChiTaRS" id="Ntpcr">
    <property type="organism name" value="mouse"/>
</dbReference>
<dbReference type="PRO" id="PR:Q9CQA9"/>
<dbReference type="Proteomes" id="UP000000589">
    <property type="component" value="Chromosome 8"/>
</dbReference>
<dbReference type="RNAct" id="Q9CQA9">
    <property type="molecule type" value="protein"/>
</dbReference>
<dbReference type="Bgee" id="ENSMUSG00000031851">
    <property type="expression patterns" value="Expressed in spermatocyte and 243 other cell types or tissues"/>
</dbReference>
<dbReference type="ExpressionAtlas" id="Q9CQA9">
    <property type="expression patterns" value="baseline and differential"/>
</dbReference>
<dbReference type="GO" id="GO:0005524">
    <property type="term" value="F:ATP binding"/>
    <property type="evidence" value="ECO:0007669"/>
    <property type="project" value="UniProtKB-KW"/>
</dbReference>
<dbReference type="GO" id="GO:0016887">
    <property type="term" value="F:ATP hydrolysis activity"/>
    <property type="evidence" value="ECO:0007669"/>
    <property type="project" value="InterPro"/>
</dbReference>
<dbReference type="GO" id="GO:0043273">
    <property type="term" value="F:CTPase activity"/>
    <property type="evidence" value="ECO:0007669"/>
    <property type="project" value="RHEA"/>
</dbReference>
<dbReference type="GO" id="GO:0003924">
    <property type="term" value="F:GTPase activity"/>
    <property type="evidence" value="ECO:0007669"/>
    <property type="project" value="RHEA"/>
</dbReference>
<dbReference type="GO" id="GO:0017111">
    <property type="term" value="F:ribonucleoside triphosphate phosphatase activity"/>
    <property type="evidence" value="ECO:0000250"/>
    <property type="project" value="UniProtKB"/>
</dbReference>
<dbReference type="CDD" id="cd19482">
    <property type="entry name" value="RecA-like_Thep1"/>
    <property type="match status" value="1"/>
</dbReference>
<dbReference type="Gene3D" id="3.40.50.300">
    <property type="entry name" value="P-loop containing nucleotide triphosphate hydrolases"/>
    <property type="match status" value="1"/>
</dbReference>
<dbReference type="HAMAP" id="MF_00796">
    <property type="entry name" value="NTPase_1"/>
    <property type="match status" value="1"/>
</dbReference>
<dbReference type="InterPro" id="IPR003593">
    <property type="entry name" value="AAA+_ATPase"/>
</dbReference>
<dbReference type="InterPro" id="IPR004948">
    <property type="entry name" value="Nuc-triphosphatase_THEP1"/>
</dbReference>
<dbReference type="InterPro" id="IPR027417">
    <property type="entry name" value="P-loop_NTPase"/>
</dbReference>
<dbReference type="NCBIfam" id="NF010248">
    <property type="entry name" value="PRK13695.1"/>
    <property type="match status" value="1"/>
</dbReference>
<dbReference type="PANTHER" id="PTHR43146">
    <property type="entry name" value="CANCER-RELATED NUCLEOSIDE-TRIPHOSPHATASE"/>
    <property type="match status" value="1"/>
</dbReference>
<dbReference type="PANTHER" id="PTHR43146:SF1">
    <property type="entry name" value="CANCER-RELATED NUCLEOSIDE-TRIPHOSPHATASE"/>
    <property type="match status" value="1"/>
</dbReference>
<dbReference type="Pfam" id="PF03266">
    <property type="entry name" value="NTPase_1"/>
    <property type="match status" value="1"/>
</dbReference>
<dbReference type="SMART" id="SM00382">
    <property type="entry name" value="AAA"/>
    <property type="match status" value="1"/>
</dbReference>
<dbReference type="SUPFAM" id="SSF52540">
    <property type="entry name" value="P-loop containing nucleoside triphosphate hydrolases"/>
    <property type="match status" value="1"/>
</dbReference>
<evidence type="ECO:0000250" key="1"/>
<evidence type="ECO:0000250" key="2">
    <source>
        <dbReference type="UniProtKB" id="Q9BSD7"/>
    </source>
</evidence>
<evidence type="ECO:0000305" key="3"/>
<evidence type="ECO:0000312" key="4">
    <source>
        <dbReference type="MGI" id="MGI:1913816"/>
    </source>
</evidence>
<gene>
    <name evidence="4" type="primary">Ntpcr</name>
</gene>
<keyword id="KW-0007">Acetylation</keyword>
<keyword id="KW-0067">ATP-binding</keyword>
<keyword id="KW-0378">Hydrolase</keyword>
<keyword id="KW-0547">Nucleotide-binding</keyword>
<keyword id="KW-1185">Reference proteome</keyword>
<proteinExistence type="evidence at protein level"/>